<protein>
    <recommendedName>
        <fullName evidence="2">Small ribosomal subunit protein uS12</fullName>
    </recommendedName>
    <alternativeName>
        <fullName evidence="3">30S ribosomal protein S12</fullName>
    </alternativeName>
</protein>
<proteinExistence type="inferred from homology"/>
<dbReference type="EMBL" id="CP001139">
    <property type="protein sequence ID" value="ACH64937.1"/>
    <property type="molecule type" value="Genomic_DNA"/>
</dbReference>
<dbReference type="RefSeq" id="WP_005417208.1">
    <property type="nucleotide sequence ID" value="NC_011184.1"/>
</dbReference>
<dbReference type="SMR" id="B5FG04"/>
<dbReference type="GeneID" id="56276751"/>
<dbReference type="KEGG" id="vfm:VFMJ11_0220"/>
<dbReference type="HOGENOM" id="CLU_104295_1_2_6"/>
<dbReference type="Proteomes" id="UP000001857">
    <property type="component" value="Chromosome I"/>
</dbReference>
<dbReference type="GO" id="GO:0015935">
    <property type="term" value="C:small ribosomal subunit"/>
    <property type="evidence" value="ECO:0007669"/>
    <property type="project" value="InterPro"/>
</dbReference>
<dbReference type="GO" id="GO:0019843">
    <property type="term" value="F:rRNA binding"/>
    <property type="evidence" value="ECO:0007669"/>
    <property type="project" value="UniProtKB-UniRule"/>
</dbReference>
<dbReference type="GO" id="GO:0003735">
    <property type="term" value="F:structural constituent of ribosome"/>
    <property type="evidence" value="ECO:0007669"/>
    <property type="project" value="InterPro"/>
</dbReference>
<dbReference type="GO" id="GO:0000049">
    <property type="term" value="F:tRNA binding"/>
    <property type="evidence" value="ECO:0007669"/>
    <property type="project" value="UniProtKB-UniRule"/>
</dbReference>
<dbReference type="GO" id="GO:0006412">
    <property type="term" value="P:translation"/>
    <property type="evidence" value="ECO:0007669"/>
    <property type="project" value="UniProtKB-UniRule"/>
</dbReference>
<dbReference type="CDD" id="cd03368">
    <property type="entry name" value="Ribosomal_S12"/>
    <property type="match status" value="1"/>
</dbReference>
<dbReference type="FunFam" id="2.40.50.140:FF:000001">
    <property type="entry name" value="30S ribosomal protein S12"/>
    <property type="match status" value="1"/>
</dbReference>
<dbReference type="Gene3D" id="2.40.50.140">
    <property type="entry name" value="Nucleic acid-binding proteins"/>
    <property type="match status" value="1"/>
</dbReference>
<dbReference type="HAMAP" id="MF_00403_B">
    <property type="entry name" value="Ribosomal_uS12_B"/>
    <property type="match status" value="1"/>
</dbReference>
<dbReference type="InterPro" id="IPR012340">
    <property type="entry name" value="NA-bd_OB-fold"/>
</dbReference>
<dbReference type="InterPro" id="IPR006032">
    <property type="entry name" value="Ribosomal_uS12"/>
</dbReference>
<dbReference type="InterPro" id="IPR005679">
    <property type="entry name" value="Ribosomal_uS12_bac"/>
</dbReference>
<dbReference type="NCBIfam" id="TIGR00981">
    <property type="entry name" value="rpsL_bact"/>
    <property type="match status" value="1"/>
</dbReference>
<dbReference type="PANTHER" id="PTHR11652">
    <property type="entry name" value="30S RIBOSOMAL PROTEIN S12 FAMILY MEMBER"/>
    <property type="match status" value="1"/>
</dbReference>
<dbReference type="Pfam" id="PF00164">
    <property type="entry name" value="Ribosom_S12_S23"/>
    <property type="match status" value="1"/>
</dbReference>
<dbReference type="PIRSF" id="PIRSF002133">
    <property type="entry name" value="Ribosomal_S12/S23"/>
    <property type="match status" value="1"/>
</dbReference>
<dbReference type="PRINTS" id="PR01034">
    <property type="entry name" value="RIBOSOMALS12"/>
</dbReference>
<dbReference type="SUPFAM" id="SSF50249">
    <property type="entry name" value="Nucleic acid-binding proteins"/>
    <property type="match status" value="1"/>
</dbReference>
<dbReference type="PROSITE" id="PS00055">
    <property type="entry name" value="RIBOSOMAL_S12"/>
    <property type="match status" value="1"/>
</dbReference>
<keyword id="KW-0488">Methylation</keyword>
<keyword id="KW-0687">Ribonucleoprotein</keyword>
<keyword id="KW-0689">Ribosomal protein</keyword>
<keyword id="KW-0694">RNA-binding</keyword>
<keyword id="KW-0699">rRNA-binding</keyword>
<keyword id="KW-0820">tRNA-binding</keyword>
<gene>
    <name evidence="2" type="primary">rpsL</name>
    <name type="ordered locus">VFMJ11_0220</name>
</gene>
<reference key="1">
    <citation type="submission" date="2008-08" db="EMBL/GenBank/DDBJ databases">
        <title>Complete sequence of Vibrio fischeri strain MJ11.</title>
        <authorList>
            <person name="Mandel M.J."/>
            <person name="Stabb E.V."/>
            <person name="Ruby E.G."/>
            <person name="Ferriera S."/>
            <person name="Johnson J."/>
            <person name="Kravitz S."/>
            <person name="Beeson K."/>
            <person name="Sutton G."/>
            <person name="Rogers Y.-H."/>
            <person name="Friedman R."/>
            <person name="Frazier M."/>
            <person name="Venter J.C."/>
        </authorList>
    </citation>
    <scope>NUCLEOTIDE SEQUENCE [LARGE SCALE GENOMIC DNA]</scope>
    <source>
        <strain>MJ11</strain>
    </source>
</reference>
<sequence>MATINQLVRKPRAKQVVKSNVPALEACPQKRGVCTRVYTTTPKKPNSALRKVCRVRLTNGFEVTSYIGGEGHNLQEHSVVLIRGGRVKDLPGVRYHTVRGALDCAGVNDRKKGRSKYGVKRPKS</sequence>
<name>RS12_ALIFM</name>
<organism>
    <name type="scientific">Aliivibrio fischeri (strain MJ11)</name>
    <name type="common">Vibrio fischeri</name>
    <dbReference type="NCBI Taxonomy" id="388396"/>
    <lineage>
        <taxon>Bacteria</taxon>
        <taxon>Pseudomonadati</taxon>
        <taxon>Pseudomonadota</taxon>
        <taxon>Gammaproteobacteria</taxon>
        <taxon>Vibrionales</taxon>
        <taxon>Vibrionaceae</taxon>
        <taxon>Aliivibrio</taxon>
    </lineage>
</organism>
<accession>B5FG04</accession>
<evidence type="ECO:0000250" key="1"/>
<evidence type="ECO:0000255" key="2">
    <source>
        <dbReference type="HAMAP-Rule" id="MF_00403"/>
    </source>
</evidence>
<evidence type="ECO:0000305" key="3"/>
<comment type="function">
    <text evidence="2">With S4 and S5 plays an important role in translational accuracy.</text>
</comment>
<comment type="function">
    <text evidence="2">Interacts with and stabilizes bases of the 16S rRNA that are involved in tRNA selection in the A site and with the mRNA backbone. Located at the interface of the 30S and 50S subunits, it traverses the body of the 30S subunit contacting proteins on the other side and probably holding the rRNA structure together. The combined cluster of proteins S8, S12 and S17 appears to hold together the shoulder and platform of the 30S subunit.</text>
</comment>
<comment type="subunit">
    <text evidence="2">Part of the 30S ribosomal subunit. Contacts proteins S8 and S17. May interact with IF1 in the 30S initiation complex.</text>
</comment>
<comment type="similarity">
    <text evidence="2">Belongs to the universal ribosomal protein uS12 family.</text>
</comment>
<feature type="chain" id="PRO_1000123536" description="Small ribosomal subunit protein uS12">
    <location>
        <begin position="1"/>
        <end position="124"/>
    </location>
</feature>
<feature type="modified residue" description="3-methylthioaspartic acid" evidence="1">
    <location>
        <position position="89"/>
    </location>
</feature>